<dbReference type="SMR" id="P0DM17"/>
<dbReference type="GO" id="GO:0005576">
    <property type="term" value="C:extracellular region"/>
    <property type="evidence" value="ECO:0007669"/>
    <property type="project" value="UniProtKB-SubCell"/>
</dbReference>
<dbReference type="GO" id="GO:0090729">
    <property type="term" value="F:toxin activity"/>
    <property type="evidence" value="ECO:0007669"/>
    <property type="project" value="UniProtKB-KW"/>
</dbReference>
<evidence type="ECO:0000255" key="1"/>
<evidence type="ECO:0000269" key="2">
    <source>
    </source>
</evidence>
<evidence type="ECO:0000303" key="3">
    <source>
    </source>
</evidence>
<evidence type="ECO:0000305" key="4"/>
<evidence type="ECO:0000305" key="5">
    <source>
    </source>
</evidence>
<proteinExistence type="evidence at protein level"/>
<accession>P0DM17</accession>
<organism>
    <name type="scientific">Conus marmoreus</name>
    <name type="common">Marble cone</name>
    <dbReference type="NCBI Taxonomy" id="42752"/>
    <lineage>
        <taxon>Eukaryota</taxon>
        <taxon>Metazoa</taxon>
        <taxon>Spiralia</taxon>
        <taxon>Lophotrochozoa</taxon>
        <taxon>Mollusca</taxon>
        <taxon>Gastropoda</taxon>
        <taxon>Caenogastropoda</taxon>
        <taxon>Neogastropoda</taxon>
        <taxon>Conoidea</taxon>
        <taxon>Conidae</taxon>
        <taxon>Conus</taxon>
    </lineage>
</organism>
<protein>
    <recommendedName>
        <fullName evidence="3">Conotoxin Mr105</fullName>
    </recommendedName>
</protein>
<name>FX1_CONMR</name>
<reference key="1">
    <citation type="journal article" date="2013" name="Mol. Cell. Proteomics">
        <title>Deep venomics reveals the mechanism for expanded peptide diversity in cone snail venom.</title>
        <authorList>
            <person name="Dutertre S."/>
            <person name="Jin A.H."/>
            <person name="Kaas Q."/>
            <person name="Jones A."/>
            <person name="Alewood P.F."/>
            <person name="Lewis R.J."/>
        </authorList>
    </citation>
    <scope>NUCLEOTIDE SEQUENCE [MRNA]</scope>
    <scope>IDENTIFICATION BY MASS SPECTROMETRY</scope>
    <scope>SUBCELLULAR LOCATION</scope>
</reference>
<sequence>MQRGAVLLGVVALLVLWPQAGAELYDVNDPDVRAMVIDGQKLMHDCAIANDYIDDPWWTLNLGAFEEKRVYHSMLSELVFCLNAFLQRRQQAP</sequence>
<keyword id="KW-1015">Disulfide bond</keyword>
<keyword id="KW-0964">Secreted</keyword>
<keyword id="KW-0732">Signal</keyword>
<keyword id="KW-0800">Toxin</keyword>
<feature type="signal peptide" evidence="1">
    <location>
        <begin position="1"/>
        <end position="22"/>
    </location>
</feature>
<feature type="propeptide" id="PRO_0000444681" evidence="5">
    <location>
        <begin position="23"/>
        <end position="33"/>
    </location>
</feature>
<feature type="chain" id="PRO_0000444682" description="Conotoxin Mr105" evidence="5">
    <location>
        <begin position="34"/>
        <end position="93"/>
    </location>
</feature>
<comment type="subcellular location">
    <subcellularLocation>
        <location evidence="2">Secreted</location>
    </subcellularLocation>
</comment>
<comment type="tissue specificity">
    <text evidence="5">Expressed by the venom duct.</text>
</comment>
<comment type="domain">
    <text evidence="4">The cysteine framework is C-C.</text>
</comment>
<comment type="PTM">
    <text evidence="4">Contains 4 disulfide bonds.</text>
</comment>
<comment type="similarity">
    <text evidence="4">Belongs to the F superfamily.</text>
</comment>